<feature type="signal peptide" evidence="2">
    <location>
        <begin position="1"/>
        <end position="22"/>
    </location>
</feature>
<feature type="propeptide" id="PRO_0000421860" evidence="2 4">
    <location>
        <begin position="23"/>
        <end position="64"/>
    </location>
</feature>
<feature type="peptide" id="PRO_5000683059" description="Kassorin-S">
    <location>
        <begin position="65"/>
        <end position="77"/>
    </location>
</feature>
<feature type="region of interest" description="Disordered" evidence="3">
    <location>
        <begin position="24"/>
        <end position="60"/>
    </location>
</feature>
<feature type="compositionally biased region" description="Basic and acidic residues" evidence="3">
    <location>
        <begin position="25"/>
        <end position="60"/>
    </location>
</feature>
<feature type="modified residue" description="Leucine amide" evidence="4">
    <location>
        <position position="77"/>
    </location>
</feature>
<protein>
    <recommendedName>
        <fullName>Kassorin-S</fullName>
    </recommendedName>
    <alternativeName>
        <fullName>PreproKassorin-S</fullName>
    </alternativeName>
</protein>
<sequence length="78" mass="8732">MLTLKKSMLLLFFLGMVSLSLANSKRADEEGEDKRADEEGEDKRADEEGEDKRADEEGEEKRKRFLGGILNTITGLLG</sequence>
<name>KASSO_KASSE</name>
<organism>
    <name type="scientific">Kassina senegalensis</name>
    <name type="common">Senegal running frog</name>
    <dbReference type="NCBI Taxonomy" id="8415"/>
    <lineage>
        <taxon>Eukaryota</taxon>
        <taxon>Metazoa</taxon>
        <taxon>Chordata</taxon>
        <taxon>Craniata</taxon>
        <taxon>Vertebrata</taxon>
        <taxon>Euteleostomi</taxon>
        <taxon>Amphibia</taxon>
        <taxon>Batrachia</taxon>
        <taxon>Anura</taxon>
        <taxon>Neobatrachia</taxon>
        <taxon>Microhyloidea</taxon>
        <taxon>Hyperoliidae</taxon>
        <taxon>Kassina</taxon>
    </lineage>
</organism>
<reference evidence="5 6" key="1">
    <citation type="journal article" date="2011" name="Mol. Immunol.">
        <title>Kassorins: novel innate immune system peptides from skin secretions of the African hyperoliid frogs, Kassina maculata and Kassina senegalensis.</title>
        <authorList>
            <person name="Chen H."/>
            <person name="Wang L."/>
            <person name="Zeller M."/>
            <person name="Hornshaw M."/>
            <person name="Wu Y."/>
            <person name="Zhou M."/>
            <person name="Li J."/>
            <person name="Hang X."/>
            <person name="Cai J."/>
            <person name="Chen T."/>
            <person name="Shaw C."/>
        </authorList>
    </citation>
    <scope>NUCLEOTIDE SEQUENCE [MRNA]</scope>
    <scope>FUNCTION</scope>
    <scope>IDENTIFICATION BY MASS SPECTROMETRY</scope>
    <scope>SUBCELLULAR LOCATION</scope>
    <scope>AMIDATION AT LEU-77</scope>
    <scope>MASS SPECTROMETRY</scope>
    <source>
        <tissue evidence="6">Skin</tissue>
    </source>
</reference>
<evidence type="ECO:0000250" key="1">
    <source>
        <dbReference type="UniProtKB" id="P82269"/>
    </source>
</evidence>
<evidence type="ECO:0000255" key="2"/>
<evidence type="ECO:0000256" key="3">
    <source>
        <dbReference type="SAM" id="MobiDB-lite"/>
    </source>
</evidence>
<evidence type="ECO:0000269" key="4">
    <source>
    </source>
</evidence>
<evidence type="ECO:0000305" key="5"/>
<evidence type="ECO:0000312" key="6">
    <source>
        <dbReference type="EMBL" id="CBL43005.1"/>
    </source>
</evidence>
<accession>E6ZBE2</accession>
<dbReference type="EMBL" id="FN691480">
    <property type="protein sequence ID" value="CBL43005.1"/>
    <property type="molecule type" value="mRNA"/>
</dbReference>
<dbReference type="GO" id="GO:0005576">
    <property type="term" value="C:extracellular region"/>
    <property type="evidence" value="ECO:0007669"/>
    <property type="project" value="UniProtKB-SubCell"/>
</dbReference>
<dbReference type="GO" id="GO:0042742">
    <property type="term" value="P:defense response to bacterium"/>
    <property type="evidence" value="ECO:0007669"/>
    <property type="project" value="UniProtKB-KW"/>
</dbReference>
<dbReference type="GO" id="GO:0050832">
    <property type="term" value="P:defense response to fungus"/>
    <property type="evidence" value="ECO:0007669"/>
    <property type="project" value="UniProtKB-KW"/>
</dbReference>
<dbReference type="GO" id="GO:0031640">
    <property type="term" value="P:killing of cells of another organism"/>
    <property type="evidence" value="ECO:0007669"/>
    <property type="project" value="UniProtKB-KW"/>
</dbReference>
<dbReference type="InterPro" id="IPR004275">
    <property type="entry name" value="Frog_antimicrobial_propeptide"/>
</dbReference>
<dbReference type="Pfam" id="PF03032">
    <property type="entry name" value="FSAP_sig_propep"/>
    <property type="match status" value="1"/>
</dbReference>
<proteinExistence type="evidence at protein level"/>
<keyword id="KW-0027">Amidation</keyword>
<keyword id="KW-0878">Amphibian defense peptide</keyword>
<keyword id="KW-0044">Antibiotic</keyword>
<keyword id="KW-0929">Antimicrobial</keyword>
<keyword id="KW-0165">Cleavage on pair of basic residues</keyword>
<keyword id="KW-0295">Fungicide</keyword>
<keyword id="KW-0964">Secreted</keyword>
<keyword id="KW-0732">Signal</keyword>
<comment type="function">
    <text evidence="4">Antimicrobial peptide. Active against the Gram-positive bacterium S.aureus (MIC=30 uM) and the yeast C.albicans (MIC=100 uM). Not effective against the Gram-negative bacterium E.coli at concentrations up to 250 uM. Lacks ability to induce contraction of smooth muscle in isolated guinea pig urinary bladder. Elicits histamine release from rat peritoneal mast cells.</text>
</comment>
<comment type="subcellular location">
    <subcellularLocation>
        <location evidence="4">Secreted</location>
    </subcellularLocation>
</comment>
<comment type="tissue specificity">
    <text evidence="4">Expressed by the skin glands.</text>
</comment>
<comment type="mass spectrometry" mass="1330.81" method="MALDI" evidence="4">
    <text>With amidation.</text>
</comment>
<comment type="similarity">
    <text evidence="1">Belongs to the frog skin active peptide (FSAP) family. Brevinin subfamily.</text>
</comment>